<feature type="chain" id="PRO_0000432511" description="Probable fatty acid methyltransferase Rv3720">
    <location>
        <begin position="1"/>
        <end position="427"/>
    </location>
</feature>
<feature type="binding site" evidence="1">
    <location>
        <begin position="167"/>
        <end position="168"/>
    </location>
    <ligand>
        <name>S-adenosyl-L-methionine</name>
        <dbReference type="ChEBI" id="CHEBI:59789"/>
    </ligand>
</feature>
<feature type="binding site" evidence="1">
    <location>
        <begin position="202"/>
        <end position="210"/>
    </location>
    <ligand>
        <name>S-adenosyl-L-methionine</name>
        <dbReference type="ChEBI" id="CHEBI:59789"/>
    </ligand>
</feature>
<feature type="binding site" evidence="1">
    <location>
        <begin position="227"/>
        <end position="232"/>
    </location>
    <ligand>
        <name>S-adenosyl-L-methionine</name>
        <dbReference type="ChEBI" id="CHEBI:59789"/>
    </ligand>
</feature>
<dbReference type="EC" id="2.1.1.-"/>
<dbReference type="EMBL" id="AL123456">
    <property type="protein sequence ID" value="CCP46546.1"/>
    <property type="status" value="ALT_INIT"/>
    <property type="molecule type" value="Genomic_DNA"/>
</dbReference>
<dbReference type="EMBL" id="CP003248">
    <property type="protein sequence ID" value="AFN51741.1"/>
    <property type="status" value="ALT_INIT"/>
    <property type="molecule type" value="Genomic_DNA"/>
</dbReference>
<dbReference type="EMBL" id="JLDD01000048">
    <property type="protein sequence ID" value="KBJ24793.1"/>
    <property type="status" value="ALT_INIT"/>
    <property type="molecule type" value="Genomic_DNA"/>
</dbReference>
<dbReference type="RefSeq" id="NP_218237.3">
    <property type="nucleotide sequence ID" value="NC_000962.3"/>
</dbReference>
<dbReference type="RefSeq" id="WP_003420415.1">
    <property type="nucleotide sequence ID" value="NC_000962.3"/>
</dbReference>
<dbReference type="SMR" id="O69687"/>
<dbReference type="FunCoup" id="O69687">
    <property type="interactions" value="1"/>
</dbReference>
<dbReference type="STRING" id="83332.Rv3720"/>
<dbReference type="PaxDb" id="83332-Rv3720"/>
<dbReference type="DNASU" id="885219"/>
<dbReference type="GeneID" id="885219"/>
<dbReference type="KEGG" id="mtu:Rv3720"/>
<dbReference type="KEGG" id="mtv:RVBD_3720"/>
<dbReference type="PATRIC" id="fig|83332.111.peg.4136"/>
<dbReference type="TubercuList" id="Rv3720"/>
<dbReference type="eggNOG" id="COG2230">
    <property type="taxonomic scope" value="Bacteria"/>
</dbReference>
<dbReference type="HOGENOM" id="CLU_026434_6_2_11"/>
<dbReference type="InParanoid" id="O69687"/>
<dbReference type="OrthoDB" id="9782855at2"/>
<dbReference type="Proteomes" id="UP000001584">
    <property type="component" value="Chromosome"/>
</dbReference>
<dbReference type="GO" id="GO:0009274">
    <property type="term" value="C:peptidoglycan-based cell wall"/>
    <property type="evidence" value="ECO:0007005"/>
    <property type="project" value="MTBBASE"/>
</dbReference>
<dbReference type="GO" id="GO:0005886">
    <property type="term" value="C:plasma membrane"/>
    <property type="evidence" value="ECO:0007005"/>
    <property type="project" value="MTBBASE"/>
</dbReference>
<dbReference type="GO" id="GO:0008825">
    <property type="term" value="F:cyclopropane-fatty-acyl-phospholipid synthase activity"/>
    <property type="evidence" value="ECO:0000318"/>
    <property type="project" value="GO_Central"/>
</dbReference>
<dbReference type="GO" id="GO:0008610">
    <property type="term" value="P:lipid biosynthetic process"/>
    <property type="evidence" value="ECO:0000318"/>
    <property type="project" value="GO_Central"/>
</dbReference>
<dbReference type="GO" id="GO:0032259">
    <property type="term" value="P:methylation"/>
    <property type="evidence" value="ECO:0007669"/>
    <property type="project" value="UniProtKB-KW"/>
</dbReference>
<dbReference type="CDD" id="cd02440">
    <property type="entry name" value="AdoMet_MTases"/>
    <property type="match status" value="1"/>
</dbReference>
<dbReference type="FunFam" id="3.40.50.150:FF:000401">
    <property type="entry name" value="Fatty acid synthase"/>
    <property type="match status" value="1"/>
</dbReference>
<dbReference type="Gene3D" id="3.40.50.150">
    <property type="entry name" value="Vaccinia Virus protein VP39"/>
    <property type="match status" value="1"/>
</dbReference>
<dbReference type="InterPro" id="IPR050723">
    <property type="entry name" value="CFA/CMAS"/>
</dbReference>
<dbReference type="InterPro" id="IPR003333">
    <property type="entry name" value="CMAS"/>
</dbReference>
<dbReference type="InterPro" id="IPR029063">
    <property type="entry name" value="SAM-dependent_MTases_sf"/>
</dbReference>
<dbReference type="PANTHER" id="PTHR43667">
    <property type="entry name" value="CYCLOPROPANE-FATTY-ACYL-PHOSPHOLIPID SYNTHASE"/>
    <property type="match status" value="1"/>
</dbReference>
<dbReference type="PANTHER" id="PTHR43667:SF1">
    <property type="entry name" value="CYCLOPROPANE-FATTY-ACYL-PHOSPHOLIPID SYNTHASE"/>
    <property type="match status" value="1"/>
</dbReference>
<dbReference type="Pfam" id="PF02353">
    <property type="entry name" value="CMAS"/>
    <property type="match status" value="1"/>
</dbReference>
<dbReference type="PIRSF" id="PIRSF003085">
    <property type="entry name" value="CMAS"/>
    <property type="match status" value="1"/>
</dbReference>
<dbReference type="SUPFAM" id="SSF53335">
    <property type="entry name" value="S-adenosyl-L-methionine-dependent methyltransferases"/>
    <property type="match status" value="1"/>
</dbReference>
<protein>
    <recommendedName>
        <fullName>Probable fatty acid methyltransferase Rv3720</fullName>
        <ecNumber>2.1.1.-</ecNumber>
    </recommendedName>
    <alternativeName>
        <fullName>S-adenosylmethionine-dependent methyltransferase Rv3720</fullName>
        <shortName>AdoMet-MT</shortName>
        <shortName>SAM-MT</shortName>
    </alternativeName>
</protein>
<keyword id="KW-0903">Direct protein sequencing</keyword>
<keyword id="KW-0444">Lipid biosynthesis</keyword>
<keyword id="KW-0443">Lipid metabolism</keyword>
<keyword id="KW-0489">Methyltransferase</keyword>
<keyword id="KW-1185">Reference proteome</keyword>
<keyword id="KW-0949">S-adenosyl-L-methionine</keyword>
<keyword id="KW-0808">Transferase</keyword>
<evidence type="ECO:0000250" key="1">
    <source>
        <dbReference type="UniProtKB" id="P9WPB7"/>
    </source>
</evidence>
<evidence type="ECO:0000269" key="2">
    <source>
    </source>
</evidence>
<evidence type="ECO:0000305" key="3"/>
<evidence type="ECO:0000312" key="4">
    <source>
        <dbReference type="EMBL" id="AFN51741.1"/>
    </source>
</evidence>
<evidence type="ECO:0000312" key="5">
    <source>
        <dbReference type="EMBL" id="CCP46546.1"/>
    </source>
</evidence>
<evidence type="ECO:0000312" key="6">
    <source>
        <dbReference type="EMBL" id="KBJ24793.1"/>
    </source>
</evidence>
<sequence length="427" mass="47600">MTTGRLSMAEILEIFTATGQHPLKFTAYDGSTAGQDDATLGLDLRTPRGATYLATAPGELGLARAYVSGDLQAHGVHPGDPYELLKTLTERVDFKRPSARVLANVVRSIGVEHILPIAPPPQEARPRWRRMANGLLHSKTRDAEAIHHHYDVSNNFYEWVLGPSMTYTCAVFPNAEASLEQAQENKYRLIFEKLRLEPGDRLLDVGCGWGGMVRYAARRGVRVIGATLSAEQAKWGQKAVEDEGLSDLAQVRHSDYRDVAETGFDAVSSIGLTEHIGVKNYPFYFGFLKSKLRTGGLLLNHCITRHDNRSTSFAGGFTDRYVFPDGELTGSGRITTEIQQVGLEVLHEENFRHHYAMTLRDWCGNLVEHWDDAVAEVGLPTAKVWGLYMAASRVAFERNNLQLHHVLATKVDPRGDDSLPLRPWWQP</sequence>
<gene>
    <name evidence="5" type="ordered locus">Rv3720</name>
    <name evidence="4" type="ordered locus">RVBD_3720</name>
    <name evidence="6" type="ORF">P425_03869</name>
</gene>
<name>FAMT_MYCTU</name>
<accession>O69687</accession>
<accession>I6X864</accession>
<organism>
    <name type="scientific">Mycobacterium tuberculosis (strain ATCC 25618 / H37Rv)</name>
    <dbReference type="NCBI Taxonomy" id="83332"/>
    <lineage>
        <taxon>Bacteria</taxon>
        <taxon>Bacillati</taxon>
        <taxon>Actinomycetota</taxon>
        <taxon>Actinomycetes</taxon>
        <taxon>Mycobacteriales</taxon>
        <taxon>Mycobacteriaceae</taxon>
        <taxon>Mycobacterium</taxon>
        <taxon>Mycobacterium tuberculosis complex</taxon>
    </lineage>
</organism>
<comment type="function">
    <text evidence="3">May be a S-adenosylmethionine-dependent methyltransferase involved in fatty acid metabolism.</text>
</comment>
<comment type="similarity">
    <text evidence="3">Belongs to the CFA/CMAS family.</text>
</comment>
<comment type="sequence caution" evidence="2">
    <conflict type="erroneous initiation">
        <sequence resource="EMBL-CDS" id="AFN51741"/>
    </conflict>
    <text>Truncated N-terminus.</text>
</comment>
<comment type="sequence caution" evidence="2">
    <conflict type="erroneous initiation">
        <sequence resource="EMBL-CDS" id="CCP46546"/>
    </conflict>
    <text>Truncated N-terminus.</text>
</comment>
<comment type="sequence caution" evidence="2">
    <conflict type="erroneous initiation">
        <sequence resource="EMBL-CDS" id="KBJ24793"/>
    </conflict>
    <text>Truncated N-terminus.</text>
</comment>
<proteinExistence type="evidence at protein level"/>
<reference key="1">
    <citation type="journal article" date="1998" name="Nature">
        <title>Deciphering the biology of Mycobacterium tuberculosis from the complete genome sequence.</title>
        <authorList>
            <person name="Cole S.T."/>
            <person name="Brosch R."/>
            <person name="Parkhill J."/>
            <person name="Garnier T."/>
            <person name="Churcher C.M."/>
            <person name="Harris D.E."/>
            <person name="Gordon S.V."/>
            <person name="Eiglmeier K."/>
            <person name="Gas S."/>
            <person name="Barry C.E. III"/>
            <person name="Tekaia F."/>
            <person name="Badcock K."/>
            <person name="Basham D."/>
            <person name="Brown D."/>
            <person name="Chillingworth T."/>
            <person name="Connor R."/>
            <person name="Davies R.M."/>
            <person name="Devlin K."/>
            <person name="Feltwell T."/>
            <person name="Gentles S."/>
            <person name="Hamlin N."/>
            <person name="Holroyd S."/>
            <person name="Hornsby T."/>
            <person name="Jagels K."/>
            <person name="Krogh A."/>
            <person name="McLean J."/>
            <person name="Moule S."/>
            <person name="Murphy L.D."/>
            <person name="Oliver S."/>
            <person name="Osborne J."/>
            <person name="Quail M.A."/>
            <person name="Rajandream M.A."/>
            <person name="Rogers J."/>
            <person name="Rutter S."/>
            <person name="Seeger K."/>
            <person name="Skelton S."/>
            <person name="Squares S."/>
            <person name="Squares R."/>
            <person name="Sulston J.E."/>
            <person name="Taylor K."/>
            <person name="Whitehead S."/>
            <person name="Barrell B.G."/>
        </authorList>
    </citation>
    <scope>NUCLEOTIDE SEQUENCE [LARGE SCALE GENOMIC DNA]</scope>
    <source>
        <strain>ATCC 25618 / H37Rv</strain>
    </source>
</reference>
<reference key="2">
    <citation type="submission" date="2013-11" db="EMBL/GenBank/DDBJ databases">
        <title>The genome sequence of Mycobacterium tuberculosis H37Rv.</title>
        <authorList>
            <consortium name="The Broad Institute Genome Sequencing Platform"/>
            <person name="Galagan J."/>
            <person name="Kreiswirth B."/>
            <person name="Dobos K."/>
            <person name="Fortune S."/>
            <person name="Fitzgerald M."/>
            <person name="Young S.K."/>
            <person name="Zeng Q."/>
            <person name="Gargeya S."/>
            <person name="Abouelleil A."/>
            <person name="Alvarado L."/>
            <person name="Berlin A.M."/>
            <person name="Chapman S.B."/>
            <person name="Gainer-Dewar J."/>
            <person name="Goldberg J."/>
            <person name="Gnerre S."/>
            <person name="Griggs A."/>
            <person name="Gujja S."/>
            <person name="Hansen M."/>
            <person name="Howarth C."/>
            <person name="Imamovic A."/>
            <person name="Larimer J."/>
            <person name="McCowan C."/>
            <person name="Murphy C."/>
            <person name="Pearson M."/>
            <person name="Poon T."/>
            <person name="Priest M."/>
            <person name="Roberts A."/>
            <person name="Saif S."/>
            <person name="Shea T."/>
            <person name="Sykes S."/>
            <person name="Wortman J."/>
            <person name="Nusbaum C."/>
            <person name="Birren B."/>
        </authorList>
    </citation>
    <scope>NUCLEOTIDE SEQUENCE [LARGE SCALE GENOMIC DNA]</scope>
    <source>
        <strain>ATCC 25618 / H37Rv</strain>
    </source>
</reference>
<reference key="3">
    <citation type="submission" date="2014-04" db="EMBL/GenBank/DDBJ databases">
        <title>The genome sequence of Mycobacterium tuberculosis H37Rv.</title>
        <authorList>
            <consortium name="The Broad Institute Genomics Platform"/>
            <consortium name="The Broad Institute Genome Sequencing Center for Infectious Disease"/>
            <person name="Earl A.M."/>
            <person name="Kreiswirth B."/>
            <person name="Gomez J."/>
            <person name="Victor T."/>
            <person name="Desjardins C."/>
            <person name="Abeel T."/>
            <person name="Young S."/>
            <person name="Zeng Q."/>
            <person name="Gargeya S."/>
            <person name="Abouelleil A."/>
            <person name="Alvarado L."/>
            <person name="Chapman S.B."/>
            <person name="Gainer-Dewar J."/>
            <person name="Goldberg J."/>
            <person name="Griggs A."/>
            <person name="Gujja S."/>
            <person name="Hansen M."/>
            <person name="Howarth C."/>
            <person name="Imamovic A."/>
            <person name="Larimer J."/>
            <person name="Murphy C."/>
            <person name="Naylor J."/>
            <person name="Pearson M."/>
            <person name="Poon T.W."/>
            <person name="Priest M."/>
            <person name="Roberts A."/>
            <person name="Saif S."/>
            <person name="Shea T."/>
            <person name="Sykes S."/>
            <person name="Wortman J."/>
            <person name="Nusbaum C."/>
            <person name="Birren B."/>
        </authorList>
    </citation>
    <scope>NUCLEOTIDE SEQUENCE [LARGE SCALE GENOMIC DNA]</scope>
    <source>
        <strain>ATCC 25618 / H37Rv</strain>
    </source>
</reference>
<reference key="4">
    <citation type="journal article" date="2022" name="Genomics">
        <title>Deep N-terminomics of Mycobacterium tuberculosis H37Rv extensively correct annotated encoding genes.</title>
        <authorList>
            <person name="Shi J."/>
            <person name="Meng S."/>
            <person name="Wan L."/>
            <person name="Zhang Z."/>
            <person name="Jiang S."/>
            <person name="Zhu H."/>
            <person name="Dai E."/>
            <person name="Chang L."/>
            <person name="Gao H."/>
            <person name="Wan K."/>
            <person name="Zhang L."/>
            <person name="Zhao X."/>
            <person name="Liu H."/>
            <person name="Lyu Z."/>
            <person name="Zhang Y."/>
            <person name="Xu P."/>
        </authorList>
    </citation>
    <scope>PROTEIN SEQUENCE OF 6-24</scope>
    <scope>SEQUENCE REVISION TO N-TERMINUS</scope>
    <source>
        <strain>H37Rv</strain>
    </source>
</reference>
<reference key="5">
    <citation type="journal article" date="2011" name="Mol. Cell. Proteomics">
        <title>Proteogenomic analysis of Mycobacterium tuberculosis by high resolution mass spectrometry.</title>
        <authorList>
            <person name="Kelkar D.S."/>
            <person name="Kumar D."/>
            <person name="Kumar P."/>
            <person name="Balakrishnan L."/>
            <person name="Muthusamy B."/>
            <person name="Yadav A.K."/>
            <person name="Shrivastava P."/>
            <person name="Marimuthu A."/>
            <person name="Anand S."/>
            <person name="Sundaram H."/>
            <person name="Kingsbury R."/>
            <person name="Harsha H.C."/>
            <person name="Nair B."/>
            <person name="Prasad T.S."/>
            <person name="Chauhan D.S."/>
            <person name="Katoch K."/>
            <person name="Katoch V.M."/>
            <person name="Kumar P."/>
            <person name="Chaerkady R."/>
            <person name="Ramachandran S."/>
            <person name="Dash D."/>
            <person name="Pandey A."/>
        </authorList>
    </citation>
    <scope>IDENTIFICATION BY MASS SPECTROMETRY [LARGE SCALE ANALYSIS]</scope>
    <source>
        <strain>ATCC 25618 / H37Rv</strain>
    </source>
</reference>